<name>FEMB_STAA8</name>
<feature type="chain" id="PRO_0000247018" description="Aminoacyltransferase FemB">
    <location>
        <begin position="1"/>
        <end position="419"/>
    </location>
</feature>
<sequence length="419" mass="49676">MKFTELTVTEFDNFVQNPSLESHYFQVKENIVTRENDGFEVVLLGIKDDNNKVIAASLFSKIPTMGSYVYYSNRGPVMDFSDLGLVDYYLKELDKYLQQHQCLYVKLDPYWLYHLYDKDIVPFEGREKNDALVNLFKSHGYEHHGFTTEYDTSSQVRWMGVLNLEGKTPETLKKTFDSQRKRNINKAINYGVKVRFLERDEFNLFLDLYRETEERAGFVSKTDDYFYNFIDTYGDKVLVPLAYIDLDEYVLKLQQELNDKENRRDQMMAKENKSDKQMKKIAELDKQIDHDQHELLNASELSKTDGPILNLASGVYFANAYEVNYFSGGSSEKYNQFMGPYMMHWFMINYCFDNGYDRYNFYGLSGDFTENSEDYGVYRFKRGFNVQIEELIGDFYKPIHKVKYWLFTTLDKLRKKLKK</sequence>
<accession>Q2FYR1</accession>
<organism>
    <name type="scientific">Staphylococcus aureus (strain NCTC 8325 / PS 47)</name>
    <dbReference type="NCBI Taxonomy" id="93061"/>
    <lineage>
        <taxon>Bacteria</taxon>
        <taxon>Bacillati</taxon>
        <taxon>Bacillota</taxon>
        <taxon>Bacilli</taxon>
        <taxon>Bacillales</taxon>
        <taxon>Staphylococcaceae</taxon>
        <taxon>Staphylococcus</taxon>
    </lineage>
</organism>
<gene>
    <name type="primary">femB</name>
    <name type="ordered locus">SAOUHSC_01374</name>
</gene>
<reference key="1">
    <citation type="book" date="2006" name="Gram positive pathogens, 2nd edition">
        <title>The Staphylococcus aureus NCTC 8325 genome.</title>
        <editorList>
            <person name="Fischetti V."/>
            <person name="Novick R."/>
            <person name="Ferretti J."/>
            <person name="Portnoy D."/>
            <person name="Rood J."/>
        </editorList>
        <authorList>
            <person name="Gillaspy A.F."/>
            <person name="Worrell V."/>
            <person name="Orvis J."/>
            <person name="Roe B.A."/>
            <person name="Dyer D.W."/>
            <person name="Iandolo J.J."/>
        </authorList>
    </citation>
    <scope>NUCLEOTIDE SEQUENCE [LARGE SCALE GENOMIC DNA]</scope>
    <source>
        <strain>NCTC 8325 / PS 47</strain>
    </source>
</reference>
<reference key="2">
    <citation type="journal article" date="1997" name="J. Bacteriol.">
        <title>Cell wall monoglycine cross-bridges and methicillin hypersusceptibility in a femAB null mutant of methicillin-resistant Staphylococcus aureus.</title>
        <authorList>
            <person name="Stranden A.M."/>
            <person name="Ehlert K."/>
            <person name="Labischinski H."/>
            <person name="Berger-Baechi B."/>
        </authorList>
    </citation>
    <scope>FUNCTION</scope>
</reference>
<reference key="3">
    <citation type="journal article" date="1997" name="J. Bacteriol.">
        <title>Specificities of FemA and FemB for different glycine residues: FemB cannot substitute for FemA in staphylococcal peptidoglycan pentaglycine side chain formation.</title>
        <authorList>
            <person name="Ehlert K."/>
            <person name="Schroeder W."/>
            <person name="Labischinski H."/>
        </authorList>
    </citation>
    <scope>FUNCTION</scope>
</reference>
<reference key="4">
    <citation type="journal article" date="2003" name="Microbiology">
        <title>Application of a bacterial two-hybrid system for the analysis of protein-protein interactions between femABX family proteins.</title>
        <authorList>
            <person name="Rohrer S."/>
            <person name="Berger-Baechi B."/>
        </authorList>
    </citation>
    <scope>SUBUNIT</scope>
    <scope>INTERACTION WITH FEMA</scope>
</reference>
<reference key="5">
    <citation type="journal article" date="2004" name="Mol. Microbiol.">
        <title>In vitro assembly of a complete, pentaglycine interpeptide bridge containing cell wall precursor (lipid II-Gly5) of Staphylococcus aureus.</title>
        <authorList>
            <person name="Schneider T."/>
            <person name="Senn M.M."/>
            <person name="Berger-Baechi B."/>
            <person name="Tossi A."/>
            <person name="Sahl H.-G."/>
            <person name="Wiedemann I."/>
        </authorList>
    </citation>
    <scope>FUNCTION</scope>
    <scope>CATALYTIC ACTIVITY</scope>
</reference>
<protein>
    <recommendedName>
        <fullName>Aminoacyltransferase FemB</fullName>
        <ecNumber>2.3.2.18</ecNumber>
    </recommendedName>
    <alternativeName>
        <fullName>Factor essential for expression of methicillin resistance B</fullName>
    </alternativeName>
    <alternativeName>
        <fullName>N-acetylmuramoyl-L-alanyl-D-glutamyl-L-lysyl-(N6-triglycine)-D-alanyl-D-alanine-diphosphoundecaprenyl-N-acetylglucosamine:glycine glycyltransferase</fullName>
    </alternativeName>
</protein>
<keyword id="KW-0012">Acyltransferase</keyword>
<keyword id="KW-0046">Antibiotic resistance</keyword>
<keyword id="KW-0133">Cell shape</keyword>
<keyword id="KW-0961">Cell wall biogenesis/degradation</keyword>
<keyword id="KW-0963">Cytoplasm</keyword>
<keyword id="KW-0573">Peptidoglycan synthesis</keyword>
<keyword id="KW-1185">Reference proteome</keyword>
<keyword id="KW-0808">Transferase</keyword>
<comment type="function">
    <text evidence="1 2 3">Catalyzes the formation of the pentaglycine interpeptide bridge, which is characteristic of the S.aureus peptidoglycan. Adds glycines 4 and 5 of the pentaglycine bridge, using glycyl-tRNA(Gly) as donor. Involved in resistance to methicillin.</text>
</comment>
<comment type="catalytic activity">
    <reaction evidence="1">
        <text>MurNAc-L-Ala-D-isoglutaminyl-L-Lys-(N(6)-tri-Gly)-D-Ala-D-Ala-diphospho-di-trans,octa-cis-undecaprenyl-GlcNAc + 2 glycyl-tRNA(Gly) = MurNAc-L-Ala-D-isoglutaminyl-L-Lys-(N(6)-penta-Gly)-D-Ala-D-Ala-diphospho-di-trans,octa-cis-undecaprenyl-GlcNAc + 2 tRNA(Gly) + 2 H(+)</text>
        <dbReference type="Rhea" id="RHEA:30443"/>
        <dbReference type="Rhea" id="RHEA-COMP:9664"/>
        <dbReference type="Rhea" id="RHEA-COMP:9683"/>
        <dbReference type="ChEBI" id="CHEBI:15378"/>
        <dbReference type="ChEBI" id="CHEBI:62235"/>
        <dbReference type="ChEBI" id="CHEBI:62236"/>
        <dbReference type="ChEBI" id="CHEBI:78442"/>
        <dbReference type="ChEBI" id="CHEBI:78522"/>
        <dbReference type="EC" id="2.3.2.18"/>
    </reaction>
</comment>
<comment type="subunit">
    <text evidence="5">Homodimer. Interacts with FemA (Probable).</text>
</comment>
<comment type="subcellular location">
    <subcellularLocation>
        <location evidence="4">Cytoplasm</location>
    </subcellularLocation>
</comment>
<comment type="miscellaneous">
    <text>Since cross-linking between the peptide strands is critical for maintaining stability of the cell wall, FemB is a potential target for the development of new antibacterial agents.</text>
</comment>
<comment type="similarity">
    <text evidence="4">Belongs to the FemABX family.</text>
</comment>
<evidence type="ECO:0000269" key="1">
    <source>
    </source>
</evidence>
<evidence type="ECO:0000269" key="2">
    <source>
    </source>
</evidence>
<evidence type="ECO:0000269" key="3">
    <source>
    </source>
</evidence>
<evidence type="ECO:0000305" key="4"/>
<evidence type="ECO:0000305" key="5">
    <source>
    </source>
</evidence>
<proteinExistence type="evidence at protein level"/>
<dbReference type="EC" id="2.3.2.18"/>
<dbReference type="EMBL" id="CP000253">
    <property type="protein sequence ID" value="ABD30469.1"/>
    <property type="molecule type" value="Genomic_DNA"/>
</dbReference>
<dbReference type="RefSeq" id="WP_000673098.1">
    <property type="nucleotide sequence ID" value="NZ_LS483365.1"/>
</dbReference>
<dbReference type="RefSeq" id="YP_499901.1">
    <property type="nucleotide sequence ID" value="NC_007795.1"/>
</dbReference>
<dbReference type="SMR" id="Q2FYR1"/>
<dbReference type="STRING" id="93061.SAOUHSC_01374"/>
<dbReference type="PaxDb" id="1280-SAXN108_1391"/>
<dbReference type="GeneID" id="3920783"/>
<dbReference type="KEGG" id="sao:SAOUHSC_01374"/>
<dbReference type="PATRIC" id="fig|93061.5.peg.1258"/>
<dbReference type="eggNOG" id="COG2348">
    <property type="taxonomic scope" value="Bacteria"/>
</dbReference>
<dbReference type="HOGENOM" id="CLU_048411_1_0_9"/>
<dbReference type="OrthoDB" id="2173585at2"/>
<dbReference type="PRO" id="PR:Q2FYR1"/>
<dbReference type="Proteomes" id="UP000008816">
    <property type="component" value="Chromosome"/>
</dbReference>
<dbReference type="GO" id="GO:0005737">
    <property type="term" value="C:cytoplasm"/>
    <property type="evidence" value="ECO:0007669"/>
    <property type="project" value="UniProtKB-SubCell"/>
</dbReference>
<dbReference type="GO" id="GO:0016755">
    <property type="term" value="F:aminoacyltransferase activity"/>
    <property type="evidence" value="ECO:0007669"/>
    <property type="project" value="InterPro"/>
</dbReference>
<dbReference type="GO" id="GO:0071555">
    <property type="term" value="P:cell wall organization"/>
    <property type="evidence" value="ECO:0007669"/>
    <property type="project" value="UniProtKB-KW"/>
</dbReference>
<dbReference type="GO" id="GO:0009252">
    <property type="term" value="P:peptidoglycan biosynthetic process"/>
    <property type="evidence" value="ECO:0007669"/>
    <property type="project" value="UniProtKB-KW"/>
</dbReference>
<dbReference type="GO" id="GO:0008360">
    <property type="term" value="P:regulation of cell shape"/>
    <property type="evidence" value="ECO:0007669"/>
    <property type="project" value="UniProtKB-KW"/>
</dbReference>
<dbReference type="GO" id="GO:0046677">
    <property type="term" value="P:response to antibiotic"/>
    <property type="evidence" value="ECO:0007669"/>
    <property type="project" value="UniProtKB-KW"/>
</dbReference>
<dbReference type="Gene3D" id="1.20.58.90">
    <property type="match status" value="1"/>
</dbReference>
<dbReference type="Gene3D" id="3.40.630.30">
    <property type="match status" value="2"/>
</dbReference>
<dbReference type="InterPro" id="IPR016181">
    <property type="entry name" value="Acyl_CoA_acyltransferase"/>
</dbReference>
<dbReference type="InterPro" id="IPR003447">
    <property type="entry name" value="FEMABX"/>
</dbReference>
<dbReference type="InterPro" id="IPR050644">
    <property type="entry name" value="PG_Glycine_Bridge_Synth"/>
</dbReference>
<dbReference type="PANTHER" id="PTHR36174:SF2">
    <property type="entry name" value="AMINOACYLTRANSFERASE FEMA"/>
    <property type="match status" value="1"/>
</dbReference>
<dbReference type="PANTHER" id="PTHR36174">
    <property type="entry name" value="LIPID II:GLYCINE GLYCYLTRANSFERASE"/>
    <property type="match status" value="1"/>
</dbReference>
<dbReference type="Pfam" id="PF02388">
    <property type="entry name" value="FemAB"/>
    <property type="match status" value="1"/>
</dbReference>
<dbReference type="SUPFAM" id="SSF55729">
    <property type="entry name" value="Acyl-CoA N-acyltransferases (Nat)"/>
    <property type="match status" value="2"/>
</dbReference>
<dbReference type="PROSITE" id="PS51191">
    <property type="entry name" value="FEMABX"/>
    <property type="match status" value="1"/>
</dbReference>